<reference key="1">
    <citation type="submission" date="2001-08" db="EMBL/GenBank/DDBJ databases">
        <title>Arabidopsis thaliana transcription factor WRKY42.</title>
        <authorList>
            <person name="Ulker B."/>
            <person name="Kushnir S."/>
            <person name="Somssich I.E."/>
        </authorList>
    </citation>
    <scope>NUCLEOTIDE SEQUENCE [MRNA]</scope>
    <source>
        <strain>cv. Columbia</strain>
        <tissue>Flower</tissue>
    </source>
</reference>
<reference key="2">
    <citation type="journal article" date="1999" name="Nature">
        <title>Sequence and analysis of chromosome 4 of the plant Arabidopsis thaliana.</title>
        <authorList>
            <person name="Mayer K.F.X."/>
            <person name="Schueller C."/>
            <person name="Wambutt R."/>
            <person name="Murphy G."/>
            <person name="Volckaert G."/>
            <person name="Pohl T."/>
            <person name="Duesterhoeft A."/>
            <person name="Stiekema W."/>
            <person name="Entian K.-D."/>
            <person name="Terryn N."/>
            <person name="Harris B."/>
            <person name="Ansorge W."/>
            <person name="Brandt P."/>
            <person name="Grivell L.A."/>
            <person name="Rieger M."/>
            <person name="Weichselgartner M."/>
            <person name="de Simone V."/>
            <person name="Obermaier B."/>
            <person name="Mache R."/>
            <person name="Mueller M."/>
            <person name="Kreis M."/>
            <person name="Delseny M."/>
            <person name="Puigdomenech P."/>
            <person name="Watson M."/>
            <person name="Schmidtheini T."/>
            <person name="Reichert B."/>
            <person name="Portetelle D."/>
            <person name="Perez-Alonso M."/>
            <person name="Boutry M."/>
            <person name="Bancroft I."/>
            <person name="Vos P."/>
            <person name="Hoheisel J."/>
            <person name="Zimmermann W."/>
            <person name="Wedler H."/>
            <person name="Ridley P."/>
            <person name="Langham S.-A."/>
            <person name="McCullagh B."/>
            <person name="Bilham L."/>
            <person name="Robben J."/>
            <person name="van der Schueren J."/>
            <person name="Grymonprez B."/>
            <person name="Chuang Y.-J."/>
            <person name="Vandenbussche F."/>
            <person name="Braeken M."/>
            <person name="Weltjens I."/>
            <person name="Voet M."/>
            <person name="Bastiaens I."/>
            <person name="Aert R."/>
            <person name="Defoor E."/>
            <person name="Weitzenegger T."/>
            <person name="Bothe G."/>
            <person name="Ramsperger U."/>
            <person name="Hilbert H."/>
            <person name="Braun M."/>
            <person name="Holzer E."/>
            <person name="Brandt A."/>
            <person name="Peters S."/>
            <person name="van Staveren M."/>
            <person name="Dirkse W."/>
            <person name="Mooijman P."/>
            <person name="Klein Lankhorst R."/>
            <person name="Rose M."/>
            <person name="Hauf J."/>
            <person name="Koetter P."/>
            <person name="Berneiser S."/>
            <person name="Hempel S."/>
            <person name="Feldpausch M."/>
            <person name="Lamberth S."/>
            <person name="Van den Daele H."/>
            <person name="De Keyser A."/>
            <person name="Buysshaert C."/>
            <person name="Gielen J."/>
            <person name="Villarroel R."/>
            <person name="De Clercq R."/>
            <person name="van Montagu M."/>
            <person name="Rogers J."/>
            <person name="Cronin A."/>
            <person name="Quail M.A."/>
            <person name="Bray-Allen S."/>
            <person name="Clark L."/>
            <person name="Doggett J."/>
            <person name="Hall S."/>
            <person name="Kay M."/>
            <person name="Lennard N."/>
            <person name="McLay K."/>
            <person name="Mayes R."/>
            <person name="Pettett A."/>
            <person name="Rajandream M.A."/>
            <person name="Lyne M."/>
            <person name="Benes V."/>
            <person name="Rechmann S."/>
            <person name="Borkova D."/>
            <person name="Bloecker H."/>
            <person name="Scharfe M."/>
            <person name="Grimm M."/>
            <person name="Loehnert T.-H."/>
            <person name="Dose S."/>
            <person name="de Haan M."/>
            <person name="Maarse A.C."/>
            <person name="Schaefer M."/>
            <person name="Mueller-Auer S."/>
            <person name="Gabel C."/>
            <person name="Fuchs M."/>
            <person name="Fartmann B."/>
            <person name="Granderath K."/>
            <person name="Dauner D."/>
            <person name="Herzl A."/>
            <person name="Neumann S."/>
            <person name="Argiriou A."/>
            <person name="Vitale D."/>
            <person name="Liguori R."/>
            <person name="Piravandi E."/>
            <person name="Massenet O."/>
            <person name="Quigley F."/>
            <person name="Clabauld G."/>
            <person name="Muendlein A."/>
            <person name="Felber R."/>
            <person name="Schnabl S."/>
            <person name="Hiller R."/>
            <person name="Schmidt W."/>
            <person name="Lecharny A."/>
            <person name="Aubourg S."/>
            <person name="Chefdor F."/>
            <person name="Cooke R."/>
            <person name="Berger C."/>
            <person name="Monfort A."/>
            <person name="Casacuberta E."/>
            <person name="Gibbons T."/>
            <person name="Weber N."/>
            <person name="Vandenbol M."/>
            <person name="Bargues M."/>
            <person name="Terol J."/>
            <person name="Torres A."/>
            <person name="Perez-Perez A."/>
            <person name="Purnelle B."/>
            <person name="Bent E."/>
            <person name="Johnson S."/>
            <person name="Tacon D."/>
            <person name="Jesse T."/>
            <person name="Heijnen L."/>
            <person name="Schwarz S."/>
            <person name="Scholler P."/>
            <person name="Heber S."/>
            <person name="Francs P."/>
            <person name="Bielke C."/>
            <person name="Frishman D."/>
            <person name="Haase D."/>
            <person name="Lemcke K."/>
            <person name="Mewes H.-W."/>
            <person name="Stocker S."/>
            <person name="Zaccaria P."/>
            <person name="Bevan M."/>
            <person name="Wilson R.K."/>
            <person name="de la Bastide M."/>
            <person name="Habermann K."/>
            <person name="Parnell L."/>
            <person name="Dedhia N."/>
            <person name="Gnoj L."/>
            <person name="Schutz K."/>
            <person name="Huang E."/>
            <person name="Spiegel L."/>
            <person name="Sekhon M."/>
            <person name="Murray J."/>
            <person name="Sheet P."/>
            <person name="Cordes M."/>
            <person name="Abu-Threideh J."/>
            <person name="Stoneking T."/>
            <person name="Kalicki J."/>
            <person name="Graves T."/>
            <person name="Harmon G."/>
            <person name="Edwards J."/>
            <person name="Latreille P."/>
            <person name="Courtney L."/>
            <person name="Cloud J."/>
            <person name="Abbott A."/>
            <person name="Scott K."/>
            <person name="Johnson D."/>
            <person name="Minx P."/>
            <person name="Bentley D."/>
            <person name="Fulton B."/>
            <person name="Miller N."/>
            <person name="Greco T."/>
            <person name="Kemp K."/>
            <person name="Kramer J."/>
            <person name="Fulton L."/>
            <person name="Mardis E."/>
            <person name="Dante M."/>
            <person name="Pepin K."/>
            <person name="Hillier L.W."/>
            <person name="Nelson J."/>
            <person name="Spieth J."/>
            <person name="Ryan E."/>
            <person name="Andrews S."/>
            <person name="Geisel C."/>
            <person name="Layman D."/>
            <person name="Du H."/>
            <person name="Ali J."/>
            <person name="Berghoff A."/>
            <person name="Jones K."/>
            <person name="Drone K."/>
            <person name="Cotton M."/>
            <person name="Joshu C."/>
            <person name="Antonoiu B."/>
            <person name="Zidanic M."/>
            <person name="Strong C."/>
            <person name="Sun H."/>
            <person name="Lamar B."/>
            <person name="Yordan C."/>
            <person name="Ma P."/>
            <person name="Zhong J."/>
            <person name="Preston R."/>
            <person name="Vil D."/>
            <person name="Shekher M."/>
            <person name="Matero A."/>
            <person name="Shah R."/>
            <person name="Swaby I.K."/>
            <person name="O'Shaughnessy A."/>
            <person name="Rodriguez M."/>
            <person name="Hoffman J."/>
            <person name="Till S."/>
            <person name="Granat S."/>
            <person name="Shohdy N."/>
            <person name="Hasegawa A."/>
            <person name="Hameed A."/>
            <person name="Lodhi M."/>
            <person name="Johnson A."/>
            <person name="Chen E."/>
            <person name="Marra M.A."/>
            <person name="Martienssen R."/>
            <person name="McCombie W.R."/>
        </authorList>
    </citation>
    <scope>NUCLEOTIDE SEQUENCE [LARGE SCALE GENOMIC DNA]</scope>
    <source>
        <strain>cv. Columbia</strain>
    </source>
</reference>
<reference key="3">
    <citation type="journal article" date="2017" name="Plant J.">
        <title>Araport11: a complete reannotation of the Arabidopsis thaliana reference genome.</title>
        <authorList>
            <person name="Cheng C.Y."/>
            <person name="Krishnakumar V."/>
            <person name="Chan A.P."/>
            <person name="Thibaud-Nissen F."/>
            <person name="Schobel S."/>
            <person name="Town C.D."/>
        </authorList>
    </citation>
    <scope>GENOME REANNOTATION</scope>
    <source>
        <strain>cv. Columbia</strain>
    </source>
</reference>
<reference key="4">
    <citation type="journal article" date="2015" name="Plant Physiol.">
        <title>WRKY42 modulates phosphate homeostasis through regulating phosphate translocation and acquisition in Arabidopsis.</title>
        <authorList>
            <person name="Su T."/>
            <person name="Xu Q."/>
            <person name="Zhang F.C."/>
            <person name="Chen Y."/>
            <person name="Li L.Q."/>
            <person name="Wu W.H."/>
            <person name="Chen Y.F."/>
        </authorList>
    </citation>
    <scope>FUNCTION</scope>
    <scope>DEGRADATION</scope>
</reference>
<proteinExistence type="evidence at protein level"/>
<accession>Q9XEC3</accession>
<protein>
    <recommendedName>
        <fullName evidence="5">WRKY transcription factor 42</fullName>
    </recommendedName>
    <alternativeName>
        <fullName evidence="5">WRKY DNA-binding protein 42</fullName>
    </alternativeName>
</protein>
<evidence type="ECO:0000250" key="1"/>
<evidence type="ECO:0000255" key="2">
    <source>
        <dbReference type="PROSITE-ProRule" id="PRU00223"/>
    </source>
</evidence>
<evidence type="ECO:0000256" key="3">
    <source>
        <dbReference type="SAM" id="MobiDB-lite"/>
    </source>
</evidence>
<evidence type="ECO:0000269" key="4">
    <source>
    </source>
</evidence>
<evidence type="ECO:0000303" key="5">
    <source ref="1"/>
</evidence>
<evidence type="ECO:0000312" key="6">
    <source>
        <dbReference type="Araport" id="AT4G04450"/>
    </source>
</evidence>
<evidence type="ECO:0000312" key="7">
    <source>
        <dbReference type="EMBL" id="AAD29757.1"/>
    </source>
</evidence>
<organism>
    <name type="scientific">Arabidopsis thaliana</name>
    <name type="common">Mouse-ear cress</name>
    <dbReference type="NCBI Taxonomy" id="3702"/>
    <lineage>
        <taxon>Eukaryota</taxon>
        <taxon>Viridiplantae</taxon>
        <taxon>Streptophyta</taxon>
        <taxon>Embryophyta</taxon>
        <taxon>Tracheophyta</taxon>
        <taxon>Spermatophyta</taxon>
        <taxon>Magnoliopsida</taxon>
        <taxon>eudicotyledons</taxon>
        <taxon>Gunneridae</taxon>
        <taxon>Pentapetalae</taxon>
        <taxon>rosids</taxon>
        <taxon>malvids</taxon>
        <taxon>Brassicales</taxon>
        <taxon>Brassicaceae</taxon>
        <taxon>Camelineae</taxon>
        <taxon>Arabidopsis</taxon>
    </lineage>
</organism>
<comment type="function">
    <text evidence="1 4">Transcription factor. Interacts specifically with the W box (5'-(T)TGAC[CT]-3'), a frequently occurring elicitor-responsive cis-acting element (By similarity). Modulates phosphate homeostasis and Pi translocation by regulating PHO1 expression (PubMed:25733771).</text>
</comment>
<comment type="interaction">
    <interactant intactId="EBI-15196907">
        <id>Q9XEC3</id>
    </interactant>
    <interactant intactId="EBI-2367993">
        <id>Q9ZSI7</id>
        <label>WRKY47</label>
    </interactant>
    <organismsDiffer>false</organismsDiffer>
    <experiments>3</experiments>
</comment>
<comment type="subcellular location">
    <subcellularLocation>
        <location evidence="2">Nucleus</location>
    </subcellularLocation>
</comment>
<comment type="PTM">
    <text evidence="4">Degraded through the 26S proteasome pathway during Pi starvation (PubMed:25733771).</text>
</comment>
<name>WRK42_ARATH</name>
<keyword id="KW-0238">DNA-binding</keyword>
<keyword id="KW-0539">Nucleus</keyword>
<keyword id="KW-1185">Reference proteome</keyword>
<keyword id="KW-0804">Transcription</keyword>
<keyword id="KW-0805">Transcription regulation</keyword>
<sequence length="528" mass="58071">MFRFPVSLGGGPRENLKPSDEQHQRAVVNEVDFFRSAEKRDRVSREEQNIIADETHRVHVKRENSRVDDHDDRSTDHINIGLNLLTANTGSDESMVDDGLSVDMEEKRTKCENAQLREELKKASEDNQRLKQMLSQTTNNFNSLQMQLVAVMRQQEDHHHLATTENNDNVKNRHEVPEMVPRQFIDLGPHSDEVSSEERTTVRSGSPPSLLEKSSSRQNGKRVLVREESPETESNGWRNPNKVPKHHASSSICGGNGSENASSKVIEQAAAEATMRKARVSVRARSEAPMLSDGCQWRKYGQKMAKGNPCPRAYYRCTMAVGCPVRKQVQRCAEDRTILITTYEGNHNHPLPPAAMNMASTTTAAASMLLSGSTMSNQDGLMNPTNLLARTILPCSSSMATISASAPFPTITLDLTESPNGNNPTNNPLMQFSQRSGLVELNQSVLPHMMGQALYYNQQSKFSGLHMPSQPLNAGESVSAATAAIASNPNFAAALAAAITSIINGSNNQQNGNNNNSNVTTSNVDNRQ</sequence>
<gene>
    <name evidence="5" type="primary">WRKY42</name>
    <name evidence="6" type="ordered locus">At4g04450</name>
    <name evidence="7" type="ORF">T26N6.6</name>
</gene>
<dbReference type="EMBL" id="AY052650">
    <property type="protein sequence ID" value="AAL11011.1"/>
    <property type="molecule type" value="mRNA"/>
</dbReference>
<dbReference type="EMBL" id="AF076243">
    <property type="protein sequence ID" value="AAD29757.1"/>
    <property type="molecule type" value="Genomic_DNA"/>
</dbReference>
<dbReference type="EMBL" id="AL161500">
    <property type="protein sequence ID" value="CAB77913.1"/>
    <property type="molecule type" value="Genomic_DNA"/>
</dbReference>
<dbReference type="EMBL" id="CP002687">
    <property type="protein sequence ID" value="AEE82389.1"/>
    <property type="molecule type" value="Genomic_DNA"/>
</dbReference>
<dbReference type="PIR" id="C85056">
    <property type="entry name" value="C85056"/>
</dbReference>
<dbReference type="RefSeq" id="NP_192354.1">
    <property type="nucleotide sequence ID" value="NM_116683.3"/>
</dbReference>
<dbReference type="SMR" id="Q9XEC3"/>
<dbReference type="BioGRID" id="11086">
    <property type="interactions" value="13"/>
</dbReference>
<dbReference type="IntAct" id="Q9XEC3">
    <property type="interactions" value="13"/>
</dbReference>
<dbReference type="STRING" id="3702.Q9XEC3"/>
<dbReference type="iPTMnet" id="Q9XEC3"/>
<dbReference type="PaxDb" id="3702-AT4G04450.1"/>
<dbReference type="ProteomicsDB" id="234365"/>
<dbReference type="EnsemblPlants" id="AT4G04450.1">
    <property type="protein sequence ID" value="AT4G04450.1"/>
    <property type="gene ID" value="AT4G04450"/>
</dbReference>
<dbReference type="GeneID" id="825775"/>
<dbReference type="Gramene" id="AT4G04450.1">
    <property type="protein sequence ID" value="AT4G04450.1"/>
    <property type="gene ID" value="AT4G04450"/>
</dbReference>
<dbReference type="KEGG" id="ath:AT4G04450"/>
<dbReference type="Araport" id="AT4G04450"/>
<dbReference type="TAIR" id="AT4G04450">
    <property type="gene designation" value="WRKY42"/>
</dbReference>
<dbReference type="eggNOG" id="ENOG502QSY8">
    <property type="taxonomic scope" value="Eukaryota"/>
</dbReference>
<dbReference type="HOGENOM" id="CLU_021824_3_1_1"/>
<dbReference type="InParanoid" id="Q9XEC3"/>
<dbReference type="OMA" id="GWGPNKL"/>
<dbReference type="PhylomeDB" id="Q9XEC3"/>
<dbReference type="PRO" id="PR:Q9XEC3"/>
<dbReference type="Proteomes" id="UP000006548">
    <property type="component" value="Chromosome 4"/>
</dbReference>
<dbReference type="ExpressionAtlas" id="Q9XEC3">
    <property type="expression patterns" value="baseline and differential"/>
</dbReference>
<dbReference type="GO" id="GO:0005634">
    <property type="term" value="C:nucleus"/>
    <property type="evidence" value="ECO:0000314"/>
    <property type="project" value="TAIR"/>
</dbReference>
<dbReference type="GO" id="GO:0003677">
    <property type="term" value="F:DNA binding"/>
    <property type="evidence" value="ECO:0000314"/>
    <property type="project" value="TAIR"/>
</dbReference>
<dbReference type="GO" id="GO:0003700">
    <property type="term" value="F:DNA-binding transcription factor activity"/>
    <property type="evidence" value="ECO:0000250"/>
    <property type="project" value="TAIR"/>
</dbReference>
<dbReference type="GO" id="GO:0043565">
    <property type="term" value="F:sequence-specific DNA binding"/>
    <property type="evidence" value="ECO:0007669"/>
    <property type="project" value="InterPro"/>
</dbReference>
<dbReference type="GO" id="GO:0045892">
    <property type="term" value="P:negative regulation of DNA-templated transcription"/>
    <property type="evidence" value="ECO:0000315"/>
    <property type="project" value="TAIR"/>
</dbReference>
<dbReference type="FunFam" id="2.20.25.80:FF:000002">
    <property type="entry name" value="probable WRKY transcription factor 31"/>
    <property type="match status" value="1"/>
</dbReference>
<dbReference type="Gene3D" id="2.20.25.80">
    <property type="entry name" value="WRKY domain"/>
    <property type="match status" value="1"/>
</dbReference>
<dbReference type="InterPro" id="IPR003657">
    <property type="entry name" value="WRKY_dom"/>
</dbReference>
<dbReference type="InterPro" id="IPR036576">
    <property type="entry name" value="WRKY_dom_sf"/>
</dbReference>
<dbReference type="InterPro" id="IPR044810">
    <property type="entry name" value="WRKY_plant"/>
</dbReference>
<dbReference type="PANTHER" id="PTHR31429">
    <property type="entry name" value="WRKY TRANSCRIPTION FACTOR 36-RELATED"/>
    <property type="match status" value="1"/>
</dbReference>
<dbReference type="PANTHER" id="PTHR31429:SF68">
    <property type="entry name" value="WRKY TRANSCRIPTION FACTOR 42"/>
    <property type="match status" value="1"/>
</dbReference>
<dbReference type="Pfam" id="PF03106">
    <property type="entry name" value="WRKY"/>
    <property type="match status" value="1"/>
</dbReference>
<dbReference type="SMART" id="SM00774">
    <property type="entry name" value="WRKY"/>
    <property type="match status" value="1"/>
</dbReference>
<dbReference type="SUPFAM" id="SSF118290">
    <property type="entry name" value="WRKY DNA-binding domain"/>
    <property type="match status" value="1"/>
</dbReference>
<dbReference type="PROSITE" id="PS50811">
    <property type="entry name" value="WRKY"/>
    <property type="match status" value="1"/>
</dbReference>
<feature type="chain" id="PRO_0000133683" description="WRKY transcription factor 42">
    <location>
        <begin position="1"/>
        <end position="528"/>
    </location>
</feature>
<feature type="DNA-binding region" description="WRKY" evidence="2">
    <location>
        <begin position="286"/>
        <end position="352"/>
    </location>
</feature>
<feature type="region of interest" description="Disordered" evidence="3">
    <location>
        <begin position="1"/>
        <end position="20"/>
    </location>
</feature>
<feature type="region of interest" description="Disordered" evidence="3">
    <location>
        <begin position="180"/>
        <end position="260"/>
    </location>
</feature>
<feature type="region of interest" description="Disordered" evidence="3">
    <location>
        <begin position="506"/>
        <end position="528"/>
    </location>
</feature>
<feature type="compositionally biased region" description="Basic and acidic residues" evidence="3">
    <location>
        <begin position="189"/>
        <end position="201"/>
    </location>
</feature>
<feature type="compositionally biased region" description="Polar residues" evidence="3">
    <location>
        <begin position="202"/>
        <end position="218"/>
    </location>
</feature>
<feature type="compositionally biased region" description="Polar residues" evidence="3">
    <location>
        <begin position="249"/>
        <end position="260"/>
    </location>
</feature>